<comment type="function">
    <text evidence="1">Tetrapolymerization of the monopyrrole PBG into the hydroxymethylbilane pre-uroporphyrinogen in several discrete steps.</text>
</comment>
<comment type="catalytic activity">
    <reaction evidence="1">
        <text>4 porphobilinogen + H2O = hydroxymethylbilane + 4 NH4(+)</text>
        <dbReference type="Rhea" id="RHEA:13185"/>
        <dbReference type="ChEBI" id="CHEBI:15377"/>
        <dbReference type="ChEBI" id="CHEBI:28938"/>
        <dbReference type="ChEBI" id="CHEBI:57845"/>
        <dbReference type="ChEBI" id="CHEBI:58126"/>
        <dbReference type="EC" id="2.5.1.61"/>
    </reaction>
</comment>
<comment type="cofactor">
    <cofactor evidence="1">
        <name>dipyrromethane</name>
        <dbReference type="ChEBI" id="CHEBI:60342"/>
    </cofactor>
    <text evidence="1">Binds 1 dipyrromethane group covalently.</text>
</comment>
<comment type="pathway">
    <text evidence="1">Porphyrin-containing compound metabolism; protoporphyrin-IX biosynthesis; coproporphyrinogen-III from 5-aminolevulinate: step 2/4.</text>
</comment>
<comment type="subunit">
    <text evidence="1">Monomer.</text>
</comment>
<comment type="miscellaneous">
    <text evidence="1">The porphobilinogen subunits are added to the dipyrromethane group.</text>
</comment>
<comment type="similarity">
    <text evidence="1">Belongs to the HMBS family.</text>
</comment>
<organism>
    <name type="scientific">Limosilactobacillus reuteri (strain DSM 20016)</name>
    <name type="common">Lactobacillus reuteri</name>
    <dbReference type="NCBI Taxonomy" id="557436"/>
    <lineage>
        <taxon>Bacteria</taxon>
        <taxon>Bacillati</taxon>
        <taxon>Bacillota</taxon>
        <taxon>Bacilli</taxon>
        <taxon>Lactobacillales</taxon>
        <taxon>Lactobacillaceae</taxon>
        <taxon>Limosilactobacillus</taxon>
    </lineage>
</organism>
<reference key="1">
    <citation type="journal article" date="2011" name="PLoS Genet.">
        <title>The evolution of host specialization in the vertebrate gut symbiont Lactobacillus reuteri.</title>
        <authorList>
            <person name="Frese S.A."/>
            <person name="Benson A.K."/>
            <person name="Tannock G.W."/>
            <person name="Loach D.M."/>
            <person name="Kim J."/>
            <person name="Zhang M."/>
            <person name="Oh P.L."/>
            <person name="Heng N.C."/>
            <person name="Patil P.B."/>
            <person name="Juge N."/>
            <person name="Mackenzie D.A."/>
            <person name="Pearson B.M."/>
            <person name="Lapidus A."/>
            <person name="Dalin E."/>
            <person name="Tice H."/>
            <person name="Goltsman E."/>
            <person name="Land M."/>
            <person name="Hauser L."/>
            <person name="Ivanova N."/>
            <person name="Kyrpides N.C."/>
            <person name="Walter J."/>
        </authorList>
    </citation>
    <scope>NUCLEOTIDE SEQUENCE [LARGE SCALE GENOMIC DNA]</scope>
    <source>
        <strain>DSM 20016</strain>
    </source>
</reference>
<dbReference type="EC" id="2.5.1.61" evidence="1"/>
<dbReference type="EMBL" id="CP000705">
    <property type="protein sequence ID" value="ABQ83941.1"/>
    <property type="molecule type" value="Genomic_DNA"/>
</dbReference>
<dbReference type="RefSeq" id="WP_003669121.1">
    <property type="nucleotide sequence ID" value="NC_009513.1"/>
</dbReference>
<dbReference type="SMR" id="A5VM67"/>
<dbReference type="STRING" id="557436.Lreu_1702"/>
<dbReference type="KEGG" id="lre:Lreu_1702"/>
<dbReference type="PATRIC" id="fig|557436.17.peg.624"/>
<dbReference type="eggNOG" id="COG0181">
    <property type="taxonomic scope" value="Bacteria"/>
</dbReference>
<dbReference type="HOGENOM" id="CLU_019704_1_0_9"/>
<dbReference type="UniPathway" id="UPA00251">
    <property type="reaction ID" value="UER00319"/>
</dbReference>
<dbReference type="Proteomes" id="UP000001991">
    <property type="component" value="Chromosome"/>
</dbReference>
<dbReference type="GO" id="GO:0005737">
    <property type="term" value="C:cytoplasm"/>
    <property type="evidence" value="ECO:0007669"/>
    <property type="project" value="TreeGrafter"/>
</dbReference>
<dbReference type="GO" id="GO:0004418">
    <property type="term" value="F:hydroxymethylbilane synthase activity"/>
    <property type="evidence" value="ECO:0007669"/>
    <property type="project" value="UniProtKB-UniRule"/>
</dbReference>
<dbReference type="GO" id="GO:0006782">
    <property type="term" value="P:protoporphyrinogen IX biosynthetic process"/>
    <property type="evidence" value="ECO:0007669"/>
    <property type="project" value="UniProtKB-UniRule"/>
</dbReference>
<dbReference type="FunFam" id="3.40.190.10:FF:000005">
    <property type="entry name" value="Porphobilinogen deaminase"/>
    <property type="match status" value="1"/>
</dbReference>
<dbReference type="FunFam" id="3.40.190.10:FF:000086">
    <property type="entry name" value="Probable porphobilinogen deaminase"/>
    <property type="match status" value="1"/>
</dbReference>
<dbReference type="Gene3D" id="3.40.190.10">
    <property type="entry name" value="Periplasmic binding protein-like II"/>
    <property type="match status" value="2"/>
</dbReference>
<dbReference type="Gene3D" id="3.30.160.40">
    <property type="entry name" value="Porphobilinogen deaminase, C-terminal domain"/>
    <property type="match status" value="1"/>
</dbReference>
<dbReference type="HAMAP" id="MF_00260">
    <property type="entry name" value="Porphobil_deam"/>
    <property type="match status" value="1"/>
</dbReference>
<dbReference type="InterPro" id="IPR000860">
    <property type="entry name" value="HemC"/>
</dbReference>
<dbReference type="InterPro" id="IPR022417">
    <property type="entry name" value="Porphobilin_deaminase_N"/>
</dbReference>
<dbReference type="InterPro" id="IPR022418">
    <property type="entry name" value="Porphobilinogen_deaminase_C"/>
</dbReference>
<dbReference type="InterPro" id="IPR036803">
    <property type="entry name" value="Porphobilinogen_deaminase_C_sf"/>
</dbReference>
<dbReference type="NCBIfam" id="TIGR00212">
    <property type="entry name" value="hemC"/>
    <property type="match status" value="1"/>
</dbReference>
<dbReference type="PANTHER" id="PTHR11557">
    <property type="entry name" value="PORPHOBILINOGEN DEAMINASE"/>
    <property type="match status" value="1"/>
</dbReference>
<dbReference type="PANTHER" id="PTHR11557:SF0">
    <property type="entry name" value="PORPHOBILINOGEN DEAMINASE"/>
    <property type="match status" value="1"/>
</dbReference>
<dbReference type="Pfam" id="PF01379">
    <property type="entry name" value="Porphobil_deam"/>
    <property type="match status" value="1"/>
</dbReference>
<dbReference type="Pfam" id="PF03900">
    <property type="entry name" value="Porphobil_deamC"/>
    <property type="match status" value="1"/>
</dbReference>
<dbReference type="PIRSF" id="PIRSF001438">
    <property type="entry name" value="4pyrrol_synth_OHMeBilane_synth"/>
    <property type="match status" value="1"/>
</dbReference>
<dbReference type="PRINTS" id="PR00151">
    <property type="entry name" value="PORPHBDMNASE"/>
</dbReference>
<dbReference type="SUPFAM" id="SSF53850">
    <property type="entry name" value="Periplasmic binding protein-like II"/>
    <property type="match status" value="1"/>
</dbReference>
<dbReference type="SUPFAM" id="SSF54782">
    <property type="entry name" value="Porphobilinogen deaminase (hydroxymethylbilane synthase), C-terminal domain"/>
    <property type="match status" value="1"/>
</dbReference>
<evidence type="ECO:0000255" key="1">
    <source>
        <dbReference type="HAMAP-Rule" id="MF_00260"/>
    </source>
</evidence>
<accession>A5VM67</accession>
<proteinExistence type="inferred from homology"/>
<protein>
    <recommendedName>
        <fullName evidence="1">Porphobilinogen deaminase</fullName>
        <shortName evidence="1">PBG</shortName>
        <ecNumber evidence="1">2.5.1.61</ecNumber>
    </recommendedName>
    <alternativeName>
        <fullName evidence="1">Hydroxymethylbilane synthase</fullName>
        <shortName evidence="1">HMBS</shortName>
    </alternativeName>
    <alternativeName>
        <fullName evidence="1">Pre-uroporphyrinogen synthase</fullName>
    </alternativeName>
</protein>
<name>HEM3_LIMRD</name>
<keyword id="KW-0627">Porphyrin biosynthesis</keyword>
<keyword id="KW-1185">Reference proteome</keyword>
<keyword id="KW-0808">Transferase</keyword>
<feature type="chain" id="PRO_1000059100" description="Porphobilinogen deaminase">
    <location>
        <begin position="1"/>
        <end position="305"/>
    </location>
</feature>
<feature type="modified residue" description="S-(dipyrrolylmethanemethyl)cysteine" evidence="1">
    <location>
        <position position="243"/>
    </location>
</feature>
<sequence>MTNKVIVGSRKSKLAMAQTELVIASLEKIFPDIKFEIKNVITEGDRNRHVSLAKIGGKGVFVKEIEDELKDGTIDFAVHSLKDVMPILPEELVLGAFPKRVSPYDCLVSRKNLSSLNDLPKGARIGTNSLRRQGQLLSIRPDLKIIPIRGNIDTRLRKIDTEALDGIILAEAGLTRLNIDLSSYHVLDLQNYIMPAVGQGCLAIECRKNDTRIRKMLDQINDEESAYCVQVEREFMRELGGSCNFPIGGHAYAKNGQILFDGLIASPNGEHVIKETKIPANNSGVGKKVADQLLAKDKFGIIEGE</sequence>
<gene>
    <name evidence="1" type="primary">hemC</name>
    <name type="ordered locus">Lreu_1702</name>
</gene>